<sequence length="242" mass="28049">MRKSFKDSLKALEADIQFANTLASEYPEEYDGGYVQMRLSYSPAAHLFLFLLQWTDCHFAGALGLLRILIYKAYVDGKTTMSLHERKTSIREFYDVLFPSLLQLHGGITDVEERKQKEICDKRYRKKDRTDKGKMSEIDLEREEECGICLEIRNKVVLPTCNHSMCINCYRNWRARSQSCPFCRGSLKRVNSGDLWIYTCSAEIADLPAIYKENLKRLLIYIDKLPLVTSDPNLVPYAPLPR</sequence>
<name>AIRP2_ARATH</name>
<protein>
    <recommendedName>
        <fullName evidence="5">E3 ubiquitin-protein ligase AIRP2</fullName>
        <ecNumber evidence="2">2.3.2.27</ecNumber>
    </recommendedName>
    <alternativeName>
        <fullName evidence="4">Protein ABA INSENSITIVE RING PROTEIN 2</fullName>
        <shortName evidence="4">AtAIRP2</shortName>
    </alternativeName>
    <alternativeName>
        <fullName evidence="5">RING-type E3 ubiquitin transferase AIRP2</fullName>
    </alternativeName>
</protein>
<accession>Q9M022</accession>
<accession>Q93WE1</accession>
<evidence type="ECO:0000255" key="1">
    <source>
        <dbReference type="PROSITE-ProRule" id="PRU00175"/>
    </source>
</evidence>
<evidence type="ECO:0000269" key="2">
    <source>
    </source>
</evidence>
<evidence type="ECO:0000269" key="3">
    <source>
    </source>
</evidence>
<evidence type="ECO:0000303" key="4">
    <source>
    </source>
</evidence>
<evidence type="ECO:0000305" key="5"/>
<evidence type="ECO:0000305" key="6">
    <source>
    </source>
</evidence>
<evidence type="ECO:0000312" key="7">
    <source>
        <dbReference type="Araport" id="AT5G01520"/>
    </source>
</evidence>
<evidence type="ECO:0000312" key="8">
    <source>
        <dbReference type="EMBL" id="CAB82268.1"/>
    </source>
</evidence>
<reference key="1">
    <citation type="journal article" date="2005" name="Plant Physiol.">
        <title>Functional analysis of the RING-type ubiquitin ligase family of Arabidopsis.</title>
        <authorList>
            <person name="Stone S.L."/>
            <person name="Hauksdottir H."/>
            <person name="Troy A."/>
            <person name="Herschleb J."/>
            <person name="Kraft E."/>
            <person name="Callis J."/>
        </authorList>
    </citation>
    <scope>NUCLEOTIDE SEQUENCE [MRNA] (ISOFORM 1)</scope>
    <source>
        <strain>cv. Columbia</strain>
        <tissue>Leaf</tissue>
    </source>
</reference>
<reference key="2">
    <citation type="journal article" date="2000" name="Nature">
        <title>Sequence and analysis of chromosome 5 of the plant Arabidopsis thaliana.</title>
        <authorList>
            <person name="Tabata S."/>
            <person name="Kaneko T."/>
            <person name="Nakamura Y."/>
            <person name="Kotani H."/>
            <person name="Kato T."/>
            <person name="Asamizu E."/>
            <person name="Miyajima N."/>
            <person name="Sasamoto S."/>
            <person name="Kimura T."/>
            <person name="Hosouchi T."/>
            <person name="Kawashima K."/>
            <person name="Kohara M."/>
            <person name="Matsumoto M."/>
            <person name="Matsuno A."/>
            <person name="Muraki A."/>
            <person name="Nakayama S."/>
            <person name="Nakazaki N."/>
            <person name="Naruo K."/>
            <person name="Okumura S."/>
            <person name="Shinpo S."/>
            <person name="Takeuchi C."/>
            <person name="Wada T."/>
            <person name="Watanabe A."/>
            <person name="Yamada M."/>
            <person name="Yasuda M."/>
            <person name="Sato S."/>
            <person name="de la Bastide M."/>
            <person name="Huang E."/>
            <person name="Spiegel L."/>
            <person name="Gnoj L."/>
            <person name="O'Shaughnessy A."/>
            <person name="Preston R."/>
            <person name="Habermann K."/>
            <person name="Murray J."/>
            <person name="Johnson D."/>
            <person name="Rohlfing T."/>
            <person name="Nelson J."/>
            <person name="Stoneking T."/>
            <person name="Pepin K."/>
            <person name="Spieth J."/>
            <person name="Sekhon M."/>
            <person name="Armstrong J."/>
            <person name="Becker M."/>
            <person name="Belter E."/>
            <person name="Cordum H."/>
            <person name="Cordes M."/>
            <person name="Courtney L."/>
            <person name="Courtney W."/>
            <person name="Dante M."/>
            <person name="Du H."/>
            <person name="Edwards J."/>
            <person name="Fryman J."/>
            <person name="Haakensen B."/>
            <person name="Lamar E."/>
            <person name="Latreille P."/>
            <person name="Leonard S."/>
            <person name="Meyer R."/>
            <person name="Mulvaney E."/>
            <person name="Ozersky P."/>
            <person name="Riley A."/>
            <person name="Strowmatt C."/>
            <person name="Wagner-McPherson C."/>
            <person name="Wollam A."/>
            <person name="Yoakum M."/>
            <person name="Bell M."/>
            <person name="Dedhia N."/>
            <person name="Parnell L."/>
            <person name="Shah R."/>
            <person name="Rodriguez M."/>
            <person name="Hoon See L."/>
            <person name="Vil D."/>
            <person name="Baker J."/>
            <person name="Kirchoff K."/>
            <person name="Toth K."/>
            <person name="King L."/>
            <person name="Bahret A."/>
            <person name="Miller B."/>
            <person name="Marra M.A."/>
            <person name="Martienssen R."/>
            <person name="McCombie W.R."/>
            <person name="Wilson R.K."/>
            <person name="Murphy G."/>
            <person name="Bancroft I."/>
            <person name="Volckaert G."/>
            <person name="Wambutt R."/>
            <person name="Duesterhoeft A."/>
            <person name="Stiekema W."/>
            <person name="Pohl T."/>
            <person name="Entian K.-D."/>
            <person name="Terryn N."/>
            <person name="Hartley N."/>
            <person name="Bent E."/>
            <person name="Johnson S."/>
            <person name="Langham S.-A."/>
            <person name="McCullagh B."/>
            <person name="Robben J."/>
            <person name="Grymonprez B."/>
            <person name="Zimmermann W."/>
            <person name="Ramsperger U."/>
            <person name="Wedler H."/>
            <person name="Balke K."/>
            <person name="Wedler E."/>
            <person name="Peters S."/>
            <person name="van Staveren M."/>
            <person name="Dirkse W."/>
            <person name="Mooijman P."/>
            <person name="Klein Lankhorst R."/>
            <person name="Weitzenegger T."/>
            <person name="Bothe G."/>
            <person name="Rose M."/>
            <person name="Hauf J."/>
            <person name="Berneiser S."/>
            <person name="Hempel S."/>
            <person name="Feldpausch M."/>
            <person name="Lamberth S."/>
            <person name="Villarroel R."/>
            <person name="Gielen J."/>
            <person name="Ardiles W."/>
            <person name="Bents O."/>
            <person name="Lemcke K."/>
            <person name="Kolesov G."/>
            <person name="Mayer K.F.X."/>
            <person name="Rudd S."/>
            <person name="Schoof H."/>
            <person name="Schueller C."/>
            <person name="Zaccaria P."/>
            <person name="Mewes H.-W."/>
            <person name="Bevan M."/>
            <person name="Fransz P.F."/>
        </authorList>
    </citation>
    <scope>NUCLEOTIDE SEQUENCE [LARGE SCALE GENOMIC DNA]</scope>
    <source>
        <strain>cv. Columbia</strain>
    </source>
</reference>
<reference key="3">
    <citation type="journal article" date="2017" name="Plant J.">
        <title>Araport11: a complete reannotation of the Arabidopsis thaliana reference genome.</title>
        <authorList>
            <person name="Cheng C.Y."/>
            <person name="Krishnakumar V."/>
            <person name="Chan A.P."/>
            <person name="Thibaud-Nissen F."/>
            <person name="Schobel S."/>
            <person name="Town C.D."/>
        </authorList>
    </citation>
    <scope>GENOME REANNOTATION</scope>
    <source>
        <strain>cv. Columbia</strain>
    </source>
</reference>
<reference key="4">
    <citation type="journal article" date="2003" name="Science">
        <title>Empirical analysis of transcriptional activity in the Arabidopsis genome.</title>
        <authorList>
            <person name="Yamada K."/>
            <person name="Lim J."/>
            <person name="Dale J.M."/>
            <person name="Chen H."/>
            <person name="Shinn P."/>
            <person name="Palm C.J."/>
            <person name="Southwick A.M."/>
            <person name="Wu H.C."/>
            <person name="Kim C.J."/>
            <person name="Nguyen M."/>
            <person name="Pham P.K."/>
            <person name="Cheuk R.F."/>
            <person name="Karlin-Newmann G."/>
            <person name="Liu S.X."/>
            <person name="Lam B."/>
            <person name="Sakano H."/>
            <person name="Wu T."/>
            <person name="Yu G."/>
            <person name="Miranda M."/>
            <person name="Quach H.L."/>
            <person name="Tripp M."/>
            <person name="Chang C.H."/>
            <person name="Lee J.M."/>
            <person name="Toriumi M.J."/>
            <person name="Chan M.M."/>
            <person name="Tang C.C."/>
            <person name="Onodera C.S."/>
            <person name="Deng J.M."/>
            <person name="Akiyama K."/>
            <person name="Ansari Y."/>
            <person name="Arakawa T."/>
            <person name="Banh J."/>
            <person name="Banno F."/>
            <person name="Bowser L."/>
            <person name="Brooks S.Y."/>
            <person name="Carninci P."/>
            <person name="Chao Q."/>
            <person name="Choy N."/>
            <person name="Enju A."/>
            <person name="Goldsmith A.D."/>
            <person name="Gurjal M."/>
            <person name="Hansen N.F."/>
            <person name="Hayashizaki Y."/>
            <person name="Johnson-Hopson C."/>
            <person name="Hsuan V.W."/>
            <person name="Iida K."/>
            <person name="Karnes M."/>
            <person name="Khan S."/>
            <person name="Koesema E."/>
            <person name="Ishida J."/>
            <person name="Jiang P.X."/>
            <person name="Jones T."/>
            <person name="Kawai J."/>
            <person name="Kamiya A."/>
            <person name="Meyers C."/>
            <person name="Nakajima M."/>
            <person name="Narusaka M."/>
            <person name="Seki M."/>
            <person name="Sakurai T."/>
            <person name="Satou M."/>
            <person name="Tamse R."/>
            <person name="Vaysberg M."/>
            <person name="Wallender E.K."/>
            <person name="Wong C."/>
            <person name="Yamamura Y."/>
            <person name="Yuan S."/>
            <person name="Shinozaki K."/>
            <person name="Davis R.W."/>
            <person name="Theologis A."/>
            <person name="Ecker J.R."/>
        </authorList>
    </citation>
    <scope>NUCLEOTIDE SEQUENCE [LARGE SCALE MRNA] (ISOFORMS 1 AND 2)</scope>
    <source>
        <strain>cv. Columbia</strain>
    </source>
</reference>
<reference key="5">
    <citation type="journal article" date="2011" name="Plant Physiol.">
        <title>The Arabidopsis RING E3 ubiquitin ligase AtAIRP2 plays combinatory roles with AtAIRP1 in abscisic acid-mediated drought stress responses.</title>
        <authorList>
            <person name="Cho S.K."/>
            <person name="Ryu M.Y."/>
            <person name="Seo D.H."/>
            <person name="Kang B.G."/>
            <person name="Kim W.T."/>
        </authorList>
    </citation>
    <scope>FUNCTION</scope>
    <scope>CATALYTIC ACTIVITY</scope>
    <scope>SUBCELLULAR LOCATION</scope>
    <scope>TISSUE SPECIFICITY</scope>
    <scope>INDUCTION</scope>
    <scope>DOMAIN</scope>
    <scope>MUTAGENESIS OF HIS-163</scope>
    <scope>DISRUPTION PHENOTYPE</scope>
</reference>
<reference key="6">
    <citation type="journal article" date="2017" name="Plant Physiol.">
        <title>AtAIRP2 E3 ligase affects ABA and high-salinity responses by stimulating its ATP1/SDIRIP1 substrate turnover.</title>
        <authorList>
            <person name="Oh T.R."/>
            <person name="Kim J.H."/>
            <person name="Cho S.K."/>
            <person name="Ryu M.Y."/>
            <person name="Yang S.W."/>
            <person name="Kim W.T."/>
        </authorList>
    </citation>
    <scope>FUNCTION</scope>
    <scope>INTERACTION WITH ATP1/SDIRIP1</scope>
</reference>
<gene>
    <name evidence="4" type="primary">AIRP2</name>
    <name evidence="7" type="ordered locus">At5g01520</name>
    <name evidence="8" type="ORF">F7A7_40</name>
</gene>
<comment type="function">
    <text evidence="2 3">Possesses E3 ubiquitin-protein ligase activity in vitro when associated with the E2 enzyme UBC8 in vitro (PubMed:21969385, PubMed:28626006). Plays combinatory roles with AIRP1 in the positive regulation of the abscisic acid-mediated drought stress response (PubMed:21969385). Plays a positive role in abscisic acid- and high salinity-regulated seed germination through the ubiquitin-proteasome-dependent down-regulation of ATP1/SDIRIP1 (PubMed:28626006).</text>
</comment>
<comment type="catalytic activity">
    <reaction evidence="2">
        <text>S-ubiquitinyl-[E2 ubiquitin-conjugating enzyme]-L-cysteine + [acceptor protein]-L-lysine = [E2 ubiquitin-conjugating enzyme]-L-cysteine + N(6)-ubiquitinyl-[acceptor protein]-L-lysine.</text>
        <dbReference type="EC" id="2.3.2.27"/>
    </reaction>
</comment>
<comment type="subunit">
    <text evidence="3">Interacts with ATP1/SDIRIP1.</text>
</comment>
<comment type="subcellular location">
    <subcellularLocation>
        <location evidence="2">Cytoplasm</location>
        <location evidence="2">Cytosol</location>
    </subcellularLocation>
</comment>
<comment type="alternative products">
    <event type="alternative splicing"/>
    <isoform>
        <id>Q9M022-1</id>
        <name>1</name>
        <sequence type="displayed"/>
    </isoform>
    <isoform>
        <id>Q9M022-2</id>
        <name>2</name>
        <sequence type="described" ref="VSP_059339"/>
    </isoform>
</comment>
<comment type="tissue specificity">
    <text evidence="2">Expressed in germinating seeds, flower organs and siliques.</text>
</comment>
<comment type="induction">
    <text evidence="2">Induced by salt stress, cold stress, drought stress and abscisic acid (ABA).</text>
</comment>
<comment type="domain">
    <text evidence="6">The RING-type zinc finger domain is required for E3 ligase activity.</text>
</comment>
<comment type="disruption phenotype">
    <text evidence="2">No visible phenotype under normal growth conditions, but mutant seeds are insensitive to germination inhibition by abscisic acid (ABA).</text>
</comment>
<comment type="miscellaneous">
    <text evidence="2">Plants over-expressing AIRP2 exhibit tolerance to severe drought stress.</text>
</comment>
<proteinExistence type="evidence at protein level"/>
<organism>
    <name type="scientific">Arabidopsis thaliana</name>
    <name type="common">Mouse-ear cress</name>
    <dbReference type="NCBI Taxonomy" id="3702"/>
    <lineage>
        <taxon>Eukaryota</taxon>
        <taxon>Viridiplantae</taxon>
        <taxon>Streptophyta</taxon>
        <taxon>Embryophyta</taxon>
        <taxon>Tracheophyta</taxon>
        <taxon>Spermatophyta</taxon>
        <taxon>Magnoliopsida</taxon>
        <taxon>eudicotyledons</taxon>
        <taxon>Gunneridae</taxon>
        <taxon>Pentapetalae</taxon>
        <taxon>rosids</taxon>
        <taxon>malvids</taxon>
        <taxon>Brassicales</taxon>
        <taxon>Brassicaceae</taxon>
        <taxon>Camelineae</taxon>
        <taxon>Arabidopsis</taxon>
    </lineage>
</organism>
<keyword id="KW-0025">Alternative splicing</keyword>
<keyword id="KW-0963">Cytoplasm</keyword>
<keyword id="KW-0479">Metal-binding</keyword>
<keyword id="KW-1185">Reference proteome</keyword>
<keyword id="KW-0346">Stress response</keyword>
<keyword id="KW-0808">Transferase</keyword>
<keyword id="KW-0833">Ubl conjugation pathway</keyword>
<keyword id="KW-0862">Zinc</keyword>
<keyword id="KW-0863">Zinc-finger</keyword>
<dbReference type="EC" id="2.3.2.27" evidence="2"/>
<dbReference type="EMBL" id="DQ059129">
    <property type="protein sequence ID" value="AAY57615.1"/>
    <property type="molecule type" value="mRNA"/>
</dbReference>
<dbReference type="EMBL" id="AL161946">
    <property type="protein sequence ID" value="CAB82268.1"/>
    <property type="molecule type" value="Genomic_DNA"/>
</dbReference>
<dbReference type="EMBL" id="CP002688">
    <property type="protein sequence ID" value="AED90355.1"/>
    <property type="molecule type" value="Genomic_DNA"/>
</dbReference>
<dbReference type="EMBL" id="CP002688">
    <property type="protein sequence ID" value="AED90356.1"/>
    <property type="molecule type" value="Genomic_DNA"/>
</dbReference>
<dbReference type="EMBL" id="AF370144">
    <property type="protein sequence ID" value="AAK43959.1"/>
    <property type="molecule type" value="mRNA"/>
</dbReference>
<dbReference type="EMBL" id="AY050835">
    <property type="protein sequence ID" value="AAK92770.1"/>
    <property type="molecule type" value="mRNA"/>
</dbReference>
<dbReference type="EMBL" id="AY056355">
    <property type="protein sequence ID" value="AAL07241.1"/>
    <property type="molecule type" value="mRNA"/>
</dbReference>
<dbReference type="EMBL" id="AY091165">
    <property type="protein sequence ID" value="AAM14104.1"/>
    <property type="molecule type" value="mRNA"/>
</dbReference>
<dbReference type="PIR" id="T48173">
    <property type="entry name" value="T48173"/>
</dbReference>
<dbReference type="RefSeq" id="NP_195772.1">
    <molecule id="Q9M022-1"/>
    <property type="nucleotide sequence ID" value="NM_120230.2"/>
</dbReference>
<dbReference type="RefSeq" id="NP_974721.1">
    <molecule id="Q9M022-2"/>
    <property type="nucleotide sequence ID" value="NM_202992.1"/>
</dbReference>
<dbReference type="SMR" id="Q9M022"/>
<dbReference type="FunCoup" id="Q9M022">
    <property type="interactions" value="2"/>
</dbReference>
<dbReference type="STRING" id="3702.Q9M022"/>
<dbReference type="PaxDb" id="3702-AT5G01520.1"/>
<dbReference type="ProteomicsDB" id="244870">
    <molecule id="Q9M022-1"/>
</dbReference>
<dbReference type="EnsemblPlants" id="AT5G01520.1">
    <molecule id="Q9M022-1"/>
    <property type="protein sequence ID" value="AT5G01520.1"/>
    <property type="gene ID" value="AT5G01520"/>
</dbReference>
<dbReference type="EnsemblPlants" id="AT5G01520.2">
    <molecule id="Q9M022-2"/>
    <property type="protein sequence ID" value="AT5G01520.2"/>
    <property type="gene ID" value="AT5G01520"/>
</dbReference>
<dbReference type="GeneID" id="831747"/>
<dbReference type="Gramene" id="AT5G01520.1">
    <molecule id="Q9M022-1"/>
    <property type="protein sequence ID" value="AT5G01520.1"/>
    <property type="gene ID" value="AT5G01520"/>
</dbReference>
<dbReference type="Gramene" id="AT5G01520.2">
    <molecule id="Q9M022-2"/>
    <property type="protein sequence ID" value="AT5G01520.2"/>
    <property type="gene ID" value="AT5G01520"/>
</dbReference>
<dbReference type="KEGG" id="ath:AT5G01520"/>
<dbReference type="Araport" id="AT5G01520"/>
<dbReference type="TAIR" id="AT5G01520">
    <property type="gene designation" value="AIRP2"/>
</dbReference>
<dbReference type="eggNOG" id="KOG1039">
    <property type="taxonomic scope" value="Eukaryota"/>
</dbReference>
<dbReference type="HOGENOM" id="CLU_059830_3_0_1"/>
<dbReference type="InParanoid" id="Q9M022"/>
<dbReference type="OMA" id="SMYIHER"/>
<dbReference type="PhylomeDB" id="Q9M022"/>
<dbReference type="PRO" id="PR:Q9M022"/>
<dbReference type="Proteomes" id="UP000006548">
    <property type="component" value="Chromosome 5"/>
</dbReference>
<dbReference type="ExpressionAtlas" id="Q9M022">
    <property type="expression patterns" value="baseline and differential"/>
</dbReference>
<dbReference type="GO" id="GO:0005829">
    <property type="term" value="C:cytosol"/>
    <property type="evidence" value="ECO:0000314"/>
    <property type="project" value="TAIR"/>
</dbReference>
<dbReference type="GO" id="GO:0061630">
    <property type="term" value="F:ubiquitin protein ligase activity"/>
    <property type="evidence" value="ECO:0000314"/>
    <property type="project" value="TAIR"/>
</dbReference>
<dbReference type="GO" id="GO:0004842">
    <property type="term" value="F:ubiquitin-protein transferase activity"/>
    <property type="evidence" value="ECO:0000314"/>
    <property type="project" value="UniProtKB"/>
</dbReference>
<dbReference type="GO" id="GO:0008270">
    <property type="term" value="F:zinc ion binding"/>
    <property type="evidence" value="ECO:0007669"/>
    <property type="project" value="UniProtKB-KW"/>
</dbReference>
<dbReference type="GO" id="GO:0009789">
    <property type="term" value="P:positive regulation of abscisic acid-activated signaling pathway"/>
    <property type="evidence" value="ECO:0000315"/>
    <property type="project" value="UniProtKB"/>
</dbReference>
<dbReference type="GO" id="GO:0009737">
    <property type="term" value="P:response to abscisic acid"/>
    <property type="evidence" value="ECO:0000315"/>
    <property type="project" value="TAIR"/>
</dbReference>
<dbReference type="GO" id="GO:0009651">
    <property type="term" value="P:response to salt stress"/>
    <property type="evidence" value="ECO:0000315"/>
    <property type="project" value="TAIR"/>
</dbReference>
<dbReference type="GO" id="GO:0006511">
    <property type="term" value="P:ubiquitin-dependent protein catabolic process"/>
    <property type="evidence" value="ECO:0000315"/>
    <property type="project" value="TAIR"/>
</dbReference>
<dbReference type="FunFam" id="3.30.40.10:FF:000660">
    <property type="entry name" value="RING/U-box superfamily protein"/>
    <property type="match status" value="1"/>
</dbReference>
<dbReference type="Gene3D" id="3.30.40.10">
    <property type="entry name" value="Zinc/RING finger domain, C3HC4 (zinc finger)"/>
    <property type="match status" value="1"/>
</dbReference>
<dbReference type="InterPro" id="IPR001841">
    <property type="entry name" value="Znf_RING"/>
</dbReference>
<dbReference type="InterPro" id="IPR013083">
    <property type="entry name" value="Znf_RING/FYVE/PHD"/>
</dbReference>
<dbReference type="InterPro" id="IPR017907">
    <property type="entry name" value="Znf_RING_CS"/>
</dbReference>
<dbReference type="PANTHER" id="PTHR15315:SF31">
    <property type="entry name" value="E3 UBIQUITIN-PROTEIN LIGASE AIRP2"/>
    <property type="match status" value="1"/>
</dbReference>
<dbReference type="PANTHER" id="PTHR15315">
    <property type="entry name" value="RING FINGER PROTEIN 41, 151"/>
    <property type="match status" value="1"/>
</dbReference>
<dbReference type="Pfam" id="PF13920">
    <property type="entry name" value="zf-C3HC4_3"/>
    <property type="match status" value="1"/>
</dbReference>
<dbReference type="SMART" id="SM00184">
    <property type="entry name" value="RING"/>
    <property type="match status" value="1"/>
</dbReference>
<dbReference type="SUPFAM" id="SSF57850">
    <property type="entry name" value="RING/U-box"/>
    <property type="match status" value="1"/>
</dbReference>
<dbReference type="PROSITE" id="PS00518">
    <property type="entry name" value="ZF_RING_1"/>
    <property type="match status" value="1"/>
</dbReference>
<dbReference type="PROSITE" id="PS50089">
    <property type="entry name" value="ZF_RING_2"/>
    <property type="match status" value="1"/>
</dbReference>
<feature type="chain" id="PRO_0000443384" description="E3 ubiquitin-protein ligase AIRP2">
    <location>
        <begin position="1"/>
        <end position="242"/>
    </location>
</feature>
<feature type="zinc finger region" description="RING-type" evidence="1">
    <location>
        <begin position="146"/>
        <end position="184"/>
    </location>
</feature>
<feature type="splice variant" id="VSP_059339" description="In isoform 2.">
    <location>
        <begin position="173"/>
        <end position="242"/>
    </location>
</feature>
<feature type="mutagenesis site" description="Abolishes E3 ubiquitin-protein ligase activity." evidence="2">
    <original>H</original>
    <variation>A</variation>
    <location>
        <position position="163"/>
    </location>
</feature>